<protein>
    <recommendedName>
        <fullName evidence="10">La-related protein 7</fullName>
    </recommendedName>
    <alternativeName>
        <fullName evidence="10">La ribonucleoprotein domain family member 7</fullName>
    </alternativeName>
</protein>
<evidence type="ECO:0000250" key="1">
    <source>
        <dbReference type="UniProtKB" id="Q4G0J3"/>
    </source>
</evidence>
<evidence type="ECO:0000255" key="2">
    <source>
        <dbReference type="PROSITE-ProRule" id="PRU00176"/>
    </source>
</evidence>
<evidence type="ECO:0000255" key="3">
    <source>
        <dbReference type="PROSITE-ProRule" id="PRU00332"/>
    </source>
</evidence>
<evidence type="ECO:0000255" key="4">
    <source>
        <dbReference type="PROSITE-ProRule" id="PRU01288"/>
    </source>
</evidence>
<evidence type="ECO:0000256" key="5">
    <source>
        <dbReference type="SAM" id="MobiDB-lite"/>
    </source>
</evidence>
<evidence type="ECO:0000269" key="6">
    <source>
    </source>
</evidence>
<evidence type="ECO:0000269" key="7">
    <source>
    </source>
</evidence>
<evidence type="ECO:0000269" key="8">
    <source>
    </source>
</evidence>
<evidence type="ECO:0000303" key="9">
    <source>
    </source>
</evidence>
<evidence type="ECO:0000303" key="10">
    <source>
    </source>
</evidence>
<evidence type="ECO:0000305" key="11"/>
<evidence type="ECO:0000312" key="12">
    <source>
        <dbReference type="MGI" id="MGI:107634"/>
    </source>
</evidence>
<evidence type="ECO:0007744" key="13">
    <source>
    </source>
</evidence>
<evidence type="ECO:0007744" key="14">
    <source>
    </source>
</evidence>
<dbReference type="EMBL" id="AC113952">
    <property type="status" value="NOT_ANNOTATED_CDS"/>
    <property type="molecule type" value="Genomic_DNA"/>
</dbReference>
<dbReference type="EMBL" id="BC020127">
    <property type="status" value="NOT_ANNOTATED_CDS"/>
    <property type="molecule type" value="mRNA"/>
</dbReference>
<dbReference type="EMBL" id="BC023165">
    <property type="protein sequence ID" value="AAH23165.1"/>
    <property type="status" value="ALT_SEQ"/>
    <property type="molecule type" value="mRNA"/>
</dbReference>
<dbReference type="EMBL" id="BC029178">
    <property type="protein sequence ID" value="AAH29178.2"/>
    <property type="molecule type" value="mRNA"/>
</dbReference>
<dbReference type="EMBL" id="AK012726">
    <property type="protein sequence ID" value="BAB28435.1"/>
    <property type="molecule type" value="mRNA"/>
</dbReference>
<dbReference type="EMBL" id="AK012772">
    <property type="protein sequence ID" value="BAB28459.1"/>
    <property type="molecule type" value="mRNA"/>
</dbReference>
<dbReference type="EMBL" id="AK015041">
    <property type="protein sequence ID" value="BAB29687.1"/>
    <property type="molecule type" value="mRNA"/>
</dbReference>
<dbReference type="EMBL" id="AK162147">
    <property type="protein sequence ID" value="BAE36753.1"/>
    <property type="molecule type" value="mRNA"/>
</dbReference>
<dbReference type="CCDS" id="CCDS38626.1">
    <molecule id="Q05CL8-1"/>
</dbReference>
<dbReference type="RefSeq" id="NP_613059.2">
    <molecule id="Q05CL8-1"/>
    <property type="nucleotide sequence ID" value="NM_138593.2"/>
</dbReference>
<dbReference type="SMR" id="Q05CL8"/>
<dbReference type="BioGRID" id="205727">
    <property type="interactions" value="13"/>
</dbReference>
<dbReference type="FunCoup" id="Q05CL8">
    <property type="interactions" value="3178"/>
</dbReference>
<dbReference type="IntAct" id="Q05CL8">
    <property type="interactions" value="6"/>
</dbReference>
<dbReference type="MINT" id="Q05CL8"/>
<dbReference type="STRING" id="10090.ENSMUSP00000029588"/>
<dbReference type="GlyGen" id="Q05CL8">
    <property type="glycosylation" value="1 site, 1 O-linked glycan (1 site)"/>
</dbReference>
<dbReference type="iPTMnet" id="Q05CL8"/>
<dbReference type="PhosphoSitePlus" id="Q05CL8"/>
<dbReference type="SwissPalm" id="Q05CL8"/>
<dbReference type="jPOST" id="Q05CL8"/>
<dbReference type="PaxDb" id="10090-ENSMUSP00000029588"/>
<dbReference type="PeptideAtlas" id="Q05CL8"/>
<dbReference type="ProteomicsDB" id="264838">
    <molecule id="Q05CL8-1"/>
</dbReference>
<dbReference type="ProteomicsDB" id="264839">
    <molecule id="Q05CL8-2"/>
</dbReference>
<dbReference type="Pumba" id="Q05CL8"/>
<dbReference type="DNASU" id="28036"/>
<dbReference type="Ensembl" id="ENSMUST00000029588.10">
    <molecule id="Q05CL8-1"/>
    <property type="protein sequence ID" value="ENSMUSP00000029588.6"/>
    <property type="gene ID" value="ENSMUSG00000027968.12"/>
</dbReference>
<dbReference type="GeneID" id="28036"/>
<dbReference type="KEGG" id="mmu:28036"/>
<dbReference type="UCSC" id="uc008rhd.1">
    <molecule id="Q05CL8-1"/>
    <property type="organism name" value="mouse"/>
</dbReference>
<dbReference type="AGR" id="MGI:107634"/>
<dbReference type="CTD" id="51574"/>
<dbReference type="MGI" id="MGI:107634">
    <property type="gene designation" value="Larp7"/>
</dbReference>
<dbReference type="VEuPathDB" id="HostDB:ENSMUSG00000027968"/>
<dbReference type="eggNOG" id="KOG0118">
    <property type="taxonomic scope" value="Eukaryota"/>
</dbReference>
<dbReference type="GeneTree" id="ENSGT00940000154949"/>
<dbReference type="HOGENOM" id="CLU_020946_2_0_1"/>
<dbReference type="InParanoid" id="Q05CL8"/>
<dbReference type="OMA" id="WCSLRNK"/>
<dbReference type="OrthoDB" id="439993at2759"/>
<dbReference type="PhylomeDB" id="Q05CL8"/>
<dbReference type="TreeFam" id="TF314476"/>
<dbReference type="BioGRID-ORCS" id="28036">
    <property type="hits" value="13 hits in 77 CRISPR screens"/>
</dbReference>
<dbReference type="ChiTaRS" id="Larp7">
    <property type="organism name" value="mouse"/>
</dbReference>
<dbReference type="PRO" id="PR:Q05CL8"/>
<dbReference type="Proteomes" id="UP000000589">
    <property type="component" value="Chromosome 3"/>
</dbReference>
<dbReference type="RNAct" id="Q05CL8">
    <property type="molecule type" value="protein"/>
</dbReference>
<dbReference type="Bgee" id="ENSMUSG00000027968">
    <property type="expression patterns" value="Expressed in seminiferous tubule of testis and 251 other cell types or tissues"/>
</dbReference>
<dbReference type="ExpressionAtlas" id="Q05CL8">
    <property type="expression patterns" value="baseline and differential"/>
</dbReference>
<dbReference type="GO" id="GO:0005654">
    <property type="term" value="C:nucleoplasm"/>
    <property type="evidence" value="ECO:0007669"/>
    <property type="project" value="UniProtKB-SubCell"/>
</dbReference>
<dbReference type="GO" id="GO:0005634">
    <property type="term" value="C:nucleus"/>
    <property type="evidence" value="ECO:0000314"/>
    <property type="project" value="UniProtKB"/>
</dbReference>
<dbReference type="GO" id="GO:1990904">
    <property type="term" value="C:ribonucleoprotein complex"/>
    <property type="evidence" value="ECO:0000250"/>
    <property type="project" value="UniProtKB"/>
</dbReference>
<dbReference type="GO" id="GO:0097322">
    <property type="term" value="F:7SK snRNA binding"/>
    <property type="evidence" value="ECO:0000250"/>
    <property type="project" value="UniProtKB"/>
</dbReference>
<dbReference type="GO" id="GO:0017070">
    <property type="term" value="F:U6 snRNA binding"/>
    <property type="evidence" value="ECO:0000315"/>
    <property type="project" value="UniProtKB"/>
</dbReference>
<dbReference type="GO" id="GO:0000494">
    <property type="term" value="P:box C/D sno(s)RNA 3'-end processing"/>
    <property type="evidence" value="ECO:0000315"/>
    <property type="project" value="UniProtKB"/>
</dbReference>
<dbReference type="GO" id="GO:0030154">
    <property type="term" value="P:cell differentiation"/>
    <property type="evidence" value="ECO:0007669"/>
    <property type="project" value="UniProtKB-KW"/>
</dbReference>
<dbReference type="GO" id="GO:0036093">
    <property type="term" value="P:germ cell proliferation"/>
    <property type="evidence" value="ECO:0000315"/>
    <property type="project" value="MGI"/>
</dbReference>
<dbReference type="GO" id="GO:0006397">
    <property type="term" value="P:mRNA processing"/>
    <property type="evidence" value="ECO:0007669"/>
    <property type="project" value="UniProtKB-KW"/>
</dbReference>
<dbReference type="GO" id="GO:0000122">
    <property type="term" value="P:negative regulation of transcription by RNA polymerase II"/>
    <property type="evidence" value="ECO:0000316"/>
    <property type="project" value="MGI"/>
</dbReference>
<dbReference type="GO" id="GO:1900087">
    <property type="term" value="P:positive regulation of G1/S transition of mitotic cell cycle"/>
    <property type="evidence" value="ECO:0000315"/>
    <property type="project" value="MGI"/>
</dbReference>
<dbReference type="GO" id="GO:1904871">
    <property type="term" value="P:positive regulation of protein localization to Cajal body"/>
    <property type="evidence" value="ECO:0000250"/>
    <property type="project" value="UniProtKB"/>
</dbReference>
<dbReference type="GO" id="GO:1905382">
    <property type="term" value="P:positive regulation of snRNA transcription by RNA polymerase II"/>
    <property type="evidence" value="ECO:0000250"/>
    <property type="project" value="UniProtKB"/>
</dbReference>
<dbReference type="GO" id="GO:0048024">
    <property type="term" value="P:regulation of mRNA splicing, via spliceosome"/>
    <property type="evidence" value="ECO:0000315"/>
    <property type="project" value="UniProtKB"/>
</dbReference>
<dbReference type="GO" id="GO:0008380">
    <property type="term" value="P:RNA splicing"/>
    <property type="evidence" value="ECO:0007669"/>
    <property type="project" value="UniProtKB-KW"/>
</dbReference>
<dbReference type="GO" id="GO:0007283">
    <property type="term" value="P:spermatogenesis"/>
    <property type="evidence" value="ECO:0000315"/>
    <property type="project" value="UniProtKB"/>
</dbReference>
<dbReference type="GO" id="GO:1990438">
    <property type="term" value="P:U6 2'-O-snRNA methylation"/>
    <property type="evidence" value="ECO:0000315"/>
    <property type="project" value="UniProtKB"/>
</dbReference>
<dbReference type="CDD" id="cd08032">
    <property type="entry name" value="LARP_7"/>
    <property type="match status" value="1"/>
</dbReference>
<dbReference type="CDD" id="cd12290">
    <property type="entry name" value="RRM1_LARP7"/>
    <property type="match status" value="1"/>
</dbReference>
<dbReference type="CDD" id="cd12542">
    <property type="entry name" value="RRM2_LARP7"/>
    <property type="match status" value="1"/>
</dbReference>
<dbReference type="FunFam" id="1.10.10.10:FF:000158">
    <property type="entry name" value="La ribonucleoprotein domain family member 7"/>
    <property type="match status" value="1"/>
</dbReference>
<dbReference type="FunFam" id="3.30.70.330:FF:000281">
    <property type="entry name" value="la-related protein 7 isoform X1"/>
    <property type="match status" value="1"/>
</dbReference>
<dbReference type="FunFam" id="3.30.70.330:FF:000379">
    <property type="entry name" value="la-related protein 7 isoform X2"/>
    <property type="match status" value="1"/>
</dbReference>
<dbReference type="Gene3D" id="3.30.70.330">
    <property type="match status" value="2"/>
</dbReference>
<dbReference type="Gene3D" id="1.10.10.10">
    <property type="entry name" value="Winged helix-like DNA-binding domain superfamily/Winged helix DNA-binding domain"/>
    <property type="match status" value="1"/>
</dbReference>
<dbReference type="InterPro" id="IPR045180">
    <property type="entry name" value="La_dom_prot"/>
</dbReference>
<dbReference type="InterPro" id="IPR006630">
    <property type="entry name" value="La_HTH"/>
</dbReference>
<dbReference type="InterPro" id="IPR014886">
    <property type="entry name" value="La_xRRM"/>
</dbReference>
<dbReference type="InterPro" id="IPR034946">
    <property type="entry name" value="LARP7_La"/>
</dbReference>
<dbReference type="InterPro" id="IPR034887">
    <property type="entry name" value="LARP7_RRM1"/>
</dbReference>
<dbReference type="InterPro" id="IPR034910">
    <property type="entry name" value="LARP7_RRM2"/>
</dbReference>
<dbReference type="InterPro" id="IPR002344">
    <property type="entry name" value="Lupus_La"/>
</dbReference>
<dbReference type="InterPro" id="IPR012677">
    <property type="entry name" value="Nucleotide-bd_a/b_plait_sf"/>
</dbReference>
<dbReference type="InterPro" id="IPR035979">
    <property type="entry name" value="RBD_domain_sf"/>
</dbReference>
<dbReference type="InterPro" id="IPR000504">
    <property type="entry name" value="RRM_dom"/>
</dbReference>
<dbReference type="InterPro" id="IPR036388">
    <property type="entry name" value="WH-like_DNA-bd_sf"/>
</dbReference>
<dbReference type="InterPro" id="IPR036390">
    <property type="entry name" value="WH_DNA-bd_sf"/>
</dbReference>
<dbReference type="PANTHER" id="PTHR22792:SF62">
    <property type="entry name" value="LA-RELATED PROTEIN 7"/>
    <property type="match status" value="1"/>
</dbReference>
<dbReference type="PANTHER" id="PTHR22792">
    <property type="entry name" value="LUPUS LA PROTEIN-RELATED"/>
    <property type="match status" value="1"/>
</dbReference>
<dbReference type="Pfam" id="PF05383">
    <property type="entry name" value="La"/>
    <property type="match status" value="1"/>
</dbReference>
<dbReference type="Pfam" id="PF00076">
    <property type="entry name" value="RRM_1"/>
    <property type="match status" value="1"/>
</dbReference>
<dbReference type="Pfam" id="PF08777">
    <property type="entry name" value="RRM_3"/>
    <property type="match status" value="1"/>
</dbReference>
<dbReference type="PRINTS" id="PR00302">
    <property type="entry name" value="LUPUSLA"/>
</dbReference>
<dbReference type="SMART" id="SM00715">
    <property type="entry name" value="LA"/>
    <property type="match status" value="1"/>
</dbReference>
<dbReference type="SMART" id="SM00360">
    <property type="entry name" value="RRM"/>
    <property type="match status" value="1"/>
</dbReference>
<dbReference type="SUPFAM" id="SSF54928">
    <property type="entry name" value="RNA-binding domain, RBD"/>
    <property type="match status" value="2"/>
</dbReference>
<dbReference type="SUPFAM" id="SSF46785">
    <property type="entry name" value="Winged helix' DNA-binding domain"/>
    <property type="match status" value="1"/>
</dbReference>
<dbReference type="PROSITE" id="PS50961">
    <property type="entry name" value="HTH_LA"/>
    <property type="match status" value="1"/>
</dbReference>
<dbReference type="PROSITE" id="PS50102">
    <property type="entry name" value="RRM"/>
    <property type="match status" value="1"/>
</dbReference>
<dbReference type="PROSITE" id="PS51939">
    <property type="entry name" value="XRRM"/>
    <property type="match status" value="1"/>
</dbReference>
<name>LARP7_MOUSE</name>
<keyword id="KW-0007">Acetylation</keyword>
<keyword id="KW-0025">Alternative splicing</keyword>
<keyword id="KW-0221">Differentiation</keyword>
<keyword id="KW-1017">Isopeptide bond</keyword>
<keyword id="KW-0507">mRNA processing</keyword>
<keyword id="KW-0508">mRNA splicing</keyword>
<keyword id="KW-0539">Nucleus</keyword>
<keyword id="KW-0597">Phosphoprotein</keyword>
<keyword id="KW-1185">Reference proteome</keyword>
<keyword id="KW-0694">RNA-binding</keyword>
<keyword id="KW-0744">Spermatogenesis</keyword>
<keyword id="KW-0804">Transcription</keyword>
<keyword id="KW-0805">Transcription regulation</keyword>
<keyword id="KW-0832">Ubl conjugation</keyword>
<comment type="function">
    <text evidence="1 8">RNA-binding protein that specifically binds distinct small nuclear RNA (snRNAs) and regulates their processing and function (PubMed:32017896). Specifically binds the 7SK snRNA (7SK RNA) and acts as a core component of the 7SK ribonucleoprotein (RNP) complex, thereby acting as a negative regulator of transcription elongation by RNA polymerase II (By similarity). The 7SK RNP complex sequesters the positive transcription elongation factor b (P-TEFb) in a large inactive 7SK RNP complex preventing RNA polymerase II phosphorylation and subsequent transcriptional elongation (By similarity). The 7SK RNP complex also promotes snRNA gene transcription by RNA polymerase II via interaction with the little elongation complex (LEC) (By similarity). LARP7 specifically binds to the highly conserved 3'-terminal U-rich stretch of 7SK RNA; on stimulation, remains associated with 7SK RNA, whereas P-TEFb is released from the complex (By similarity). LARP7 also acts as a regulator of mRNA splicing fidelity by promoting U6 snRNA processing (PubMed:32017896). Specifically binds U6 snRNAs and associates with a subset of box C/D RNP complexes: promotes U6 snRNA 2'-O-methylation by facilitating U6 snRNA loading into box C/D RNP complexes (PubMed:32017896). U6 snRNA 2'-O-methylation is required for mRNA splicing fidelity (PubMed:32017896). Binds U6 snRNAs with a 5'-CAGGG-3' sequence motif (By similarity). U6 snRNA processing is required for spermatogenesis (PubMed:32017896).</text>
</comment>
<comment type="subunit">
    <text evidence="1 8">Core component of the 7SK RNP complex, at least composed of 7SK RNA, LARP7, MEPCE, HEXIM1 (or HEXIM2) and P-TEFb (composed of CDK9 and CCNT1/cyclin-T1) (By similarity). Interacts with METTL16 (By similarity). Interacts with RBM7; upon genotoxic stress this interaction is enhanced, triggering the release of inactive P-TEFb complex from the core, yielding to P-TEFb complex activation (By similarity). Associates with box C/D small nucleolar ribonucleoprotein (snoRNP) complexes (PubMed:32017896).</text>
</comment>
<comment type="subcellular location">
    <subcellularLocation>
        <location evidence="8">Nucleus</location>
        <location evidence="8">Nucleoplasm</location>
    </subcellularLocation>
</comment>
<comment type="alternative products">
    <event type="alternative splicing"/>
    <isoform>
        <id>Q05CL8-1</id>
        <name>1</name>
        <sequence type="displayed"/>
    </isoform>
    <isoform>
        <id>Q05CL8-2</id>
        <name>2</name>
        <sequence type="described" ref="VSP_024022 VSP_024023"/>
    </isoform>
</comment>
<comment type="developmental stage">
    <text evidence="6 7">Preferentially expressed in primordial germ cells (PubMed:23154982). Ubiquitously expressed in the embryo (PubMed:22865833).</text>
</comment>
<comment type="domain">
    <text evidence="1">The xRRM domain binds the 3' end of 7SK snRNA (7SK RNA) at the top of stem-loop 4.</text>
</comment>
<comment type="disruption phenotype">
    <text evidence="7 8">Embryonic lethality between embryonic day 17.5 dpc and birth (PubMed:23154982). Conditional knockout mice lacking Larp7 in germline cells show defects in spermatogenesis: males are sterile, whereas all females display normal fertility (PubMed:32017896). Cells show reduced 2'-O-methylation of U6 snRNAs and defects in mRNA splicing (PubMed:32017896).</text>
</comment>
<comment type="similarity">
    <text evidence="11">Belongs to the LARP7 family.</text>
</comment>
<comment type="sequence caution" evidence="11">
    <conflict type="erroneous termination">
        <sequence resource="EMBL-CDS" id="AAH23165"/>
    </conflict>
    <text>Extended C-terminus.</text>
</comment>
<feature type="chain" id="PRO_0000281144" description="La-related protein 7">
    <location>
        <begin position="1"/>
        <end position="570"/>
    </location>
</feature>
<feature type="domain" description="HTH La-type RNA-binding" evidence="3">
    <location>
        <begin position="22"/>
        <end position="116"/>
    </location>
</feature>
<feature type="domain" description="RRM" evidence="2">
    <location>
        <begin position="119"/>
        <end position="197"/>
    </location>
</feature>
<feature type="domain" description="xRRM" evidence="4">
    <location>
        <begin position="438"/>
        <end position="551"/>
    </location>
</feature>
<feature type="region of interest" description="Disordered" evidence="5">
    <location>
        <begin position="1"/>
        <end position="24"/>
    </location>
</feature>
<feature type="region of interest" description="Disordered" evidence="5">
    <location>
        <begin position="180"/>
        <end position="364"/>
    </location>
</feature>
<feature type="compositionally biased region" description="Basic and acidic residues" evidence="5">
    <location>
        <begin position="1"/>
        <end position="16"/>
    </location>
</feature>
<feature type="compositionally biased region" description="Basic residues" evidence="5">
    <location>
        <begin position="213"/>
        <end position="222"/>
    </location>
</feature>
<feature type="compositionally biased region" description="Basic and acidic residues" evidence="5">
    <location>
        <begin position="286"/>
        <end position="295"/>
    </location>
</feature>
<feature type="compositionally biased region" description="Basic and acidic residues" evidence="5">
    <location>
        <begin position="340"/>
        <end position="349"/>
    </location>
</feature>
<feature type="compositionally biased region" description="Basic residues" evidence="5">
    <location>
        <begin position="350"/>
        <end position="363"/>
    </location>
</feature>
<feature type="modified residue" description="N-acetylmethionine" evidence="1">
    <location>
        <position position="1"/>
    </location>
</feature>
<feature type="modified residue" description="Phosphothreonine" evidence="14">
    <location>
        <position position="251"/>
    </location>
</feature>
<feature type="modified residue" description="Phosphoserine" evidence="14">
    <location>
        <position position="253"/>
    </location>
</feature>
<feature type="modified residue" description="Phosphoserine" evidence="14">
    <location>
        <position position="256"/>
    </location>
</feature>
<feature type="modified residue" description="Phosphothreonine" evidence="13 14">
    <location>
        <position position="260"/>
    </location>
</feature>
<feature type="modified residue" description="Phosphoserine" evidence="1">
    <location>
        <position position="294"/>
    </location>
</feature>
<feature type="modified residue" description="Phosphoserine" evidence="14">
    <location>
        <position position="334"/>
    </location>
</feature>
<feature type="modified residue" description="Phosphothreonine" evidence="14">
    <location>
        <position position="335"/>
    </location>
</feature>
<feature type="modified residue" description="Phosphoserine" evidence="1">
    <location>
        <position position="347"/>
    </location>
</feature>
<feature type="cross-link" description="Glycyl lysine isopeptide (Lys-Gly) (interchain with G-Cter in SUMO2)" evidence="1">
    <location>
        <position position="231"/>
    </location>
</feature>
<feature type="cross-link" description="Glycyl lysine isopeptide (Lys-Gly) (interchain with G-Cter in SUMO2)" evidence="1">
    <location>
        <position position="406"/>
    </location>
</feature>
<feature type="splice variant" id="VSP_024022" description="In isoform 2." evidence="9">
    <original>FLNNPPE</original>
    <variation>VRTSVGP</variation>
    <location>
        <begin position="179"/>
        <end position="185"/>
    </location>
</feature>
<feature type="splice variant" id="VSP_024023" description="In isoform 2." evidence="9">
    <location>
        <begin position="186"/>
        <end position="570"/>
    </location>
</feature>
<feature type="mutagenesis site" description="Reduced binding to U6 snRNA without affecting binding to 7SK RNA. Reduced 2'-O-methylation of U6 snRNAs." evidence="8">
    <original>F</original>
    <variation>A</variation>
    <location>
        <position position="38"/>
    </location>
</feature>
<feature type="sequence conflict" description="In Ref. 2; BC020127." evidence="11" ref="2">
    <original>T</original>
    <variation>TE</variation>
    <location>
        <position position="13"/>
    </location>
</feature>
<feature type="sequence conflict" description="In Ref. 2; AAH23165." evidence="11" ref="2">
    <original>P</original>
    <variation>L</variation>
    <location>
        <position position="202"/>
    </location>
</feature>
<feature type="sequence conflict" description="In Ref. 3; BAB28459." evidence="11" ref="3">
    <original>K</original>
    <variation>R</variation>
    <location>
        <position position="214"/>
    </location>
</feature>
<accession>Q05CL8</accession>
<accession>Q3TSC2</accession>
<accession>Q8K2Y6</accession>
<accession>Q8VDW3</accession>
<accession>Q9CSI2</accession>
<accession>Q9CSI9</accession>
<accession>Q9CUQ5</accession>
<organism>
    <name type="scientific">Mus musculus</name>
    <name type="common">Mouse</name>
    <dbReference type="NCBI Taxonomy" id="10090"/>
    <lineage>
        <taxon>Eukaryota</taxon>
        <taxon>Metazoa</taxon>
        <taxon>Chordata</taxon>
        <taxon>Craniata</taxon>
        <taxon>Vertebrata</taxon>
        <taxon>Euteleostomi</taxon>
        <taxon>Mammalia</taxon>
        <taxon>Eutheria</taxon>
        <taxon>Euarchontoglires</taxon>
        <taxon>Glires</taxon>
        <taxon>Rodentia</taxon>
        <taxon>Myomorpha</taxon>
        <taxon>Muroidea</taxon>
        <taxon>Muridae</taxon>
        <taxon>Murinae</taxon>
        <taxon>Mus</taxon>
        <taxon>Mus</taxon>
    </lineage>
</organism>
<gene>
    <name evidence="10 12" type="primary">Larp7</name>
    <name evidence="12" type="synonym">D3Wsu161e</name>
</gene>
<reference key="1">
    <citation type="journal article" date="2009" name="PLoS Biol.">
        <title>Lineage-specific biology revealed by a finished genome assembly of the mouse.</title>
        <authorList>
            <person name="Church D.M."/>
            <person name="Goodstadt L."/>
            <person name="Hillier L.W."/>
            <person name="Zody M.C."/>
            <person name="Goldstein S."/>
            <person name="She X."/>
            <person name="Bult C.J."/>
            <person name="Agarwala R."/>
            <person name="Cherry J.L."/>
            <person name="DiCuccio M."/>
            <person name="Hlavina W."/>
            <person name="Kapustin Y."/>
            <person name="Meric P."/>
            <person name="Maglott D."/>
            <person name="Birtle Z."/>
            <person name="Marques A.C."/>
            <person name="Graves T."/>
            <person name="Zhou S."/>
            <person name="Teague B."/>
            <person name="Potamousis K."/>
            <person name="Churas C."/>
            <person name="Place M."/>
            <person name="Herschleb J."/>
            <person name="Runnheim R."/>
            <person name="Forrest D."/>
            <person name="Amos-Landgraf J."/>
            <person name="Schwartz D.C."/>
            <person name="Cheng Z."/>
            <person name="Lindblad-Toh K."/>
            <person name="Eichler E.E."/>
            <person name="Ponting C.P."/>
        </authorList>
    </citation>
    <scope>NUCLEOTIDE SEQUENCE [LARGE SCALE GENOMIC DNA]</scope>
    <source>
        <strain>C57BL/6J</strain>
    </source>
</reference>
<reference key="2">
    <citation type="journal article" date="2004" name="Genome Res.">
        <title>The status, quality, and expansion of the NIH full-length cDNA project: the Mammalian Gene Collection (MGC).</title>
        <authorList>
            <consortium name="The MGC Project Team"/>
        </authorList>
    </citation>
    <scope>NUCLEOTIDE SEQUENCE [LARGE SCALE MRNA] (ISOFORM 2)</scope>
    <scope>NUCLEOTIDE SEQUENCE [LARGE SCALE MRNA] OF 1-355 AND 388-570 (ISOFORM 1)</scope>
    <source>
        <strain>Czech II</strain>
        <strain>FVB/N</strain>
        <tissue>Mammary tumor</tissue>
    </source>
</reference>
<reference key="3">
    <citation type="journal article" date="2005" name="Science">
        <title>The transcriptional landscape of the mammalian genome.</title>
        <authorList>
            <person name="Carninci P."/>
            <person name="Kasukawa T."/>
            <person name="Katayama S."/>
            <person name="Gough J."/>
            <person name="Frith M.C."/>
            <person name="Maeda N."/>
            <person name="Oyama R."/>
            <person name="Ravasi T."/>
            <person name="Lenhard B."/>
            <person name="Wells C."/>
            <person name="Kodzius R."/>
            <person name="Shimokawa K."/>
            <person name="Bajic V.B."/>
            <person name="Brenner S.E."/>
            <person name="Batalov S."/>
            <person name="Forrest A.R."/>
            <person name="Zavolan M."/>
            <person name="Davis M.J."/>
            <person name="Wilming L.G."/>
            <person name="Aidinis V."/>
            <person name="Allen J.E."/>
            <person name="Ambesi-Impiombato A."/>
            <person name="Apweiler R."/>
            <person name="Aturaliya R.N."/>
            <person name="Bailey T.L."/>
            <person name="Bansal M."/>
            <person name="Baxter L."/>
            <person name="Beisel K.W."/>
            <person name="Bersano T."/>
            <person name="Bono H."/>
            <person name="Chalk A.M."/>
            <person name="Chiu K.P."/>
            <person name="Choudhary V."/>
            <person name="Christoffels A."/>
            <person name="Clutterbuck D.R."/>
            <person name="Crowe M.L."/>
            <person name="Dalla E."/>
            <person name="Dalrymple B.P."/>
            <person name="de Bono B."/>
            <person name="Della Gatta G."/>
            <person name="di Bernardo D."/>
            <person name="Down T."/>
            <person name="Engstrom P."/>
            <person name="Fagiolini M."/>
            <person name="Faulkner G."/>
            <person name="Fletcher C.F."/>
            <person name="Fukushima T."/>
            <person name="Furuno M."/>
            <person name="Futaki S."/>
            <person name="Gariboldi M."/>
            <person name="Georgii-Hemming P."/>
            <person name="Gingeras T.R."/>
            <person name="Gojobori T."/>
            <person name="Green R.E."/>
            <person name="Gustincich S."/>
            <person name="Harbers M."/>
            <person name="Hayashi Y."/>
            <person name="Hensch T.K."/>
            <person name="Hirokawa N."/>
            <person name="Hill D."/>
            <person name="Huminiecki L."/>
            <person name="Iacono M."/>
            <person name="Ikeo K."/>
            <person name="Iwama A."/>
            <person name="Ishikawa T."/>
            <person name="Jakt M."/>
            <person name="Kanapin A."/>
            <person name="Katoh M."/>
            <person name="Kawasawa Y."/>
            <person name="Kelso J."/>
            <person name="Kitamura H."/>
            <person name="Kitano H."/>
            <person name="Kollias G."/>
            <person name="Krishnan S.P."/>
            <person name="Kruger A."/>
            <person name="Kummerfeld S.K."/>
            <person name="Kurochkin I.V."/>
            <person name="Lareau L.F."/>
            <person name="Lazarevic D."/>
            <person name="Lipovich L."/>
            <person name="Liu J."/>
            <person name="Liuni S."/>
            <person name="McWilliam S."/>
            <person name="Madan Babu M."/>
            <person name="Madera M."/>
            <person name="Marchionni L."/>
            <person name="Matsuda H."/>
            <person name="Matsuzawa S."/>
            <person name="Miki H."/>
            <person name="Mignone F."/>
            <person name="Miyake S."/>
            <person name="Morris K."/>
            <person name="Mottagui-Tabar S."/>
            <person name="Mulder N."/>
            <person name="Nakano N."/>
            <person name="Nakauchi H."/>
            <person name="Ng P."/>
            <person name="Nilsson R."/>
            <person name="Nishiguchi S."/>
            <person name="Nishikawa S."/>
            <person name="Nori F."/>
            <person name="Ohara O."/>
            <person name="Okazaki Y."/>
            <person name="Orlando V."/>
            <person name="Pang K.C."/>
            <person name="Pavan W.J."/>
            <person name="Pavesi G."/>
            <person name="Pesole G."/>
            <person name="Petrovsky N."/>
            <person name="Piazza S."/>
            <person name="Reed J."/>
            <person name="Reid J.F."/>
            <person name="Ring B.Z."/>
            <person name="Ringwald M."/>
            <person name="Rost B."/>
            <person name="Ruan Y."/>
            <person name="Salzberg S.L."/>
            <person name="Sandelin A."/>
            <person name="Schneider C."/>
            <person name="Schoenbach C."/>
            <person name="Sekiguchi K."/>
            <person name="Semple C.A."/>
            <person name="Seno S."/>
            <person name="Sessa L."/>
            <person name="Sheng Y."/>
            <person name="Shibata Y."/>
            <person name="Shimada H."/>
            <person name="Shimada K."/>
            <person name="Silva D."/>
            <person name="Sinclair B."/>
            <person name="Sperling S."/>
            <person name="Stupka E."/>
            <person name="Sugiura K."/>
            <person name="Sultana R."/>
            <person name="Takenaka Y."/>
            <person name="Taki K."/>
            <person name="Tammoja K."/>
            <person name="Tan S.L."/>
            <person name="Tang S."/>
            <person name="Taylor M.S."/>
            <person name="Tegner J."/>
            <person name="Teichmann S.A."/>
            <person name="Ueda H.R."/>
            <person name="van Nimwegen E."/>
            <person name="Verardo R."/>
            <person name="Wei C.L."/>
            <person name="Yagi K."/>
            <person name="Yamanishi H."/>
            <person name="Zabarovsky E."/>
            <person name="Zhu S."/>
            <person name="Zimmer A."/>
            <person name="Hide W."/>
            <person name="Bult C."/>
            <person name="Grimmond S.M."/>
            <person name="Teasdale R.D."/>
            <person name="Liu E.T."/>
            <person name="Brusic V."/>
            <person name="Quackenbush J."/>
            <person name="Wahlestedt C."/>
            <person name="Mattick J.S."/>
            <person name="Hume D.A."/>
            <person name="Kai C."/>
            <person name="Sasaki D."/>
            <person name="Tomaru Y."/>
            <person name="Fukuda S."/>
            <person name="Kanamori-Katayama M."/>
            <person name="Suzuki M."/>
            <person name="Aoki J."/>
            <person name="Arakawa T."/>
            <person name="Iida J."/>
            <person name="Imamura K."/>
            <person name="Itoh M."/>
            <person name="Kato T."/>
            <person name="Kawaji H."/>
            <person name="Kawagashira N."/>
            <person name="Kawashima T."/>
            <person name="Kojima M."/>
            <person name="Kondo S."/>
            <person name="Konno H."/>
            <person name="Nakano K."/>
            <person name="Ninomiya N."/>
            <person name="Nishio T."/>
            <person name="Okada M."/>
            <person name="Plessy C."/>
            <person name="Shibata K."/>
            <person name="Shiraki T."/>
            <person name="Suzuki S."/>
            <person name="Tagami M."/>
            <person name="Waki K."/>
            <person name="Watahiki A."/>
            <person name="Okamura-Oho Y."/>
            <person name="Suzuki H."/>
            <person name="Kawai J."/>
            <person name="Hayashizaki Y."/>
        </authorList>
    </citation>
    <scope>NUCLEOTIDE SEQUENCE [LARGE SCALE MRNA] OF 1-342 AND 511-570 (ISOFORM 1)</scope>
    <source>
        <strain>C57BL/6J</strain>
        <tissue>Egg</tissue>
        <tissue>Embryo</tissue>
        <tissue>Testis</tissue>
    </source>
</reference>
<reference key="4">
    <citation type="journal article" date="2007" name="Proc. Natl. Acad. Sci. U.S.A.">
        <title>Large-scale phosphorylation analysis of mouse liver.</title>
        <authorList>
            <person name="Villen J."/>
            <person name="Beausoleil S.A."/>
            <person name="Gerber S.A."/>
            <person name="Gygi S.P."/>
        </authorList>
    </citation>
    <scope>PHOSPHORYLATION [LARGE SCALE ANALYSIS] AT THR-260</scope>
    <scope>IDENTIFICATION BY MASS SPECTROMETRY [LARGE SCALE ANALYSIS]</scope>
    <source>
        <tissue>Liver</tissue>
    </source>
</reference>
<reference key="5">
    <citation type="journal article" date="2007" name="Science">
        <title>ATM and ATR substrate analysis reveals extensive protein networks responsive to DNA damage.</title>
        <authorList>
            <person name="Matsuoka S."/>
            <person name="Ballif B.A."/>
            <person name="Smogorzewska A."/>
            <person name="McDonald E.R. III"/>
            <person name="Hurov K.E."/>
            <person name="Luo J."/>
            <person name="Bakalarski C.E."/>
            <person name="Zhao Z."/>
            <person name="Solimini N."/>
            <person name="Lerenthal Y."/>
            <person name="Shiloh Y."/>
            <person name="Gygi S.P."/>
            <person name="Elledge S.J."/>
        </authorList>
    </citation>
    <scope>IDENTIFICATION BY MASS SPECTROMETRY [LARGE SCALE ANALYSIS]</scope>
    <source>
        <tissue>Embryonic fibroblast</tissue>
    </source>
</reference>
<reference key="6">
    <citation type="journal article" date="2009" name="Mol. Cell. Proteomics">
        <title>Large scale localization of protein phosphorylation by use of electron capture dissociation mass spectrometry.</title>
        <authorList>
            <person name="Sweet S.M."/>
            <person name="Bailey C.M."/>
            <person name="Cunningham D.L."/>
            <person name="Heath J.K."/>
            <person name="Cooper H.J."/>
        </authorList>
    </citation>
    <scope>IDENTIFICATION BY MASS SPECTROMETRY [LARGE SCALE ANALYSIS]</scope>
    <source>
        <tissue>Embryonic fibroblast</tissue>
    </source>
</reference>
<reference key="7">
    <citation type="journal article" date="2010" name="Cell">
        <title>A tissue-specific atlas of mouse protein phosphorylation and expression.</title>
        <authorList>
            <person name="Huttlin E.L."/>
            <person name="Jedrychowski M.P."/>
            <person name="Elias J.E."/>
            <person name="Goswami T."/>
            <person name="Rad R."/>
            <person name="Beausoleil S.A."/>
            <person name="Villen J."/>
            <person name="Haas W."/>
            <person name="Sowa M.E."/>
            <person name="Gygi S.P."/>
        </authorList>
    </citation>
    <scope>PHOSPHORYLATION [LARGE SCALE ANALYSIS] AT THR-251; SER-253; SER-256; THR-260; SER-334 AND THR-335</scope>
    <scope>IDENTIFICATION BY MASS SPECTROMETRY [LARGE SCALE ANALYSIS]</scope>
    <source>
        <tissue>Brain</tissue>
        <tissue>Brown adipose tissue</tissue>
        <tissue>Kidney</tissue>
        <tissue>Lung</tissue>
        <tissue>Pancreas</tissue>
        <tissue>Spleen</tissue>
        <tissue>Testis</tissue>
    </source>
</reference>
<reference key="8">
    <citation type="journal article" date="2012" name="Genes Dev.">
        <title>Cell cycle gene-specific control of transcription has a critical role in proliferation of primordial germ cells.</title>
        <authorList>
            <person name="Okamura D."/>
            <person name="Maeda I."/>
            <person name="Taniguchi H."/>
            <person name="Tokitake Y."/>
            <person name="Ikeda M."/>
            <person name="Ozato K."/>
            <person name="Mise N."/>
            <person name="Abe K."/>
            <person name="Noce T."/>
            <person name="Izpisua Belmonte J.C."/>
            <person name="Matsui Y."/>
        </authorList>
    </citation>
    <scope>DEVELOPMENTAL STAGE</scope>
    <scope>DISRUPTION PHENOTYPE</scope>
</reference>
<reference key="9">
    <citation type="journal article" date="2012" name="Hum. Mutat.">
        <title>Loss of function mutation in LARP7, chaperone of 7SK ncRNA, causes a syndrome of facial dysmorphism, intellectual disability, and primordial dwarfism.</title>
        <authorList>
            <person name="Alazami A.M."/>
            <person name="Al-Owain M."/>
            <person name="Alzahrani F."/>
            <person name="Shuaib T."/>
            <person name="Al-Shamrani H."/>
            <person name="Al-Falki Y.H."/>
            <person name="Al-Qahtani S.M."/>
            <person name="Alsheddi T."/>
            <person name="Colak D."/>
            <person name="Alkuraya F.S."/>
        </authorList>
    </citation>
    <scope>DEVELOPMENTAL STAGE</scope>
</reference>
<reference key="10">
    <citation type="journal article" date="2020" name="Mol. Cell">
        <title>LARP7-mediated U6 snRNA modification ensures splicing fidelity and spermatogenesis in mice.</title>
        <authorList>
            <person name="Wang X."/>
            <person name="Li Z.T."/>
            <person name="Yan Y."/>
            <person name="Lin P."/>
            <person name="Tang W."/>
            <person name="Hasler D."/>
            <person name="Meduri R."/>
            <person name="Li Y."/>
            <person name="Hua M.M."/>
            <person name="Qi H.T."/>
            <person name="Lin D.H."/>
            <person name="Shi H.J."/>
            <person name="Hui J."/>
            <person name="Li J."/>
            <person name="Li D."/>
            <person name="Yang J.H."/>
            <person name="Lin J."/>
            <person name="Meister G."/>
            <person name="Fischer U."/>
            <person name="Liu M.F."/>
        </authorList>
    </citation>
    <scope>FUNCTION</scope>
    <scope>SUBCELLULAR LOCATION</scope>
    <scope>DISRUPTION PHENOTYPE</scope>
    <scope>MUTAGENESIS OF PHE-38</scope>
</reference>
<sequence length="570" mass="64802">METENQKTMEESTKRKEEKKKRSRVKQVLADIAKQVDFWFGDANLHKDKFLREQIEKSRDGYVDISLLVSFNKMKKLTTDGKLIARALKSSSVVELDLEGTRIRRKKPLGERPKDEEERTVYVELLPKNVTHSWIERVFGKCGNVVYISIPHYKSTGDPKGFAFVEFETKEQAAKAIEFLNNPPEEAPRKPGIFPKTVKNKPIPSLRVAEEKKKKKKKKGRIKKEESVQAKESAVDSSSSGVCKATKRPRTASEGSEAETPEAPKQPAKKKKKRDKVEASSLPEARAGKRERCSAEDEDCLPPRPKAKKRAQKDGVGQAASEVSKESRDLEFCSTEEEKETDRKGDSLSKVKRKHKKKHKERHKMGEEVIPLRVLSKTEWMDLKKEYLALQKASMASLKKTISQIKLESEMETDCKAPTAGSGQECSTQEKVSAQGPQFVTGVIVKIVSGEPLPGRKQVKDILATISEVVYIDLLEGDTECHARFKTPEDAQAVMNAQTEIRKKHSWNLEVLSGDHEQRYWQKILVDRQAKLNQPREKKRGTEKLITKAEKIRLAKTQQASQHIRFSEYD</sequence>
<proteinExistence type="evidence at protein level"/>